<reference key="1">
    <citation type="submission" date="2005-08" db="EMBL/GenBank/DDBJ databases">
        <title>Complete sequence of Chlorobium chlorochromatii CaD3.</title>
        <authorList>
            <consortium name="US DOE Joint Genome Institute"/>
            <person name="Copeland A."/>
            <person name="Lucas S."/>
            <person name="Lapidus A."/>
            <person name="Barry K."/>
            <person name="Detter J.C."/>
            <person name="Glavina T."/>
            <person name="Hammon N."/>
            <person name="Israni S."/>
            <person name="Pitluck S."/>
            <person name="Bryant D."/>
            <person name="Schmutz J."/>
            <person name="Larimer F."/>
            <person name="Land M."/>
            <person name="Kyrpides N."/>
            <person name="Ivanova N."/>
            <person name="Richardson P."/>
        </authorList>
    </citation>
    <scope>NUCLEOTIDE SEQUENCE [LARGE SCALE GENOMIC DNA]</scope>
    <source>
        <strain>CaD3</strain>
    </source>
</reference>
<gene>
    <name evidence="1" type="primary">frr</name>
    <name type="ordered locus">Cag_0326</name>
</gene>
<organism>
    <name type="scientific">Chlorobium chlorochromatii (strain CaD3)</name>
    <dbReference type="NCBI Taxonomy" id="340177"/>
    <lineage>
        <taxon>Bacteria</taxon>
        <taxon>Pseudomonadati</taxon>
        <taxon>Chlorobiota</taxon>
        <taxon>Chlorobiia</taxon>
        <taxon>Chlorobiales</taxon>
        <taxon>Chlorobiaceae</taxon>
        <taxon>Chlorobium/Pelodictyon group</taxon>
        <taxon>Chlorobium</taxon>
    </lineage>
</organism>
<evidence type="ECO:0000255" key="1">
    <source>
        <dbReference type="HAMAP-Rule" id="MF_00040"/>
    </source>
</evidence>
<keyword id="KW-0963">Cytoplasm</keyword>
<keyword id="KW-0648">Protein biosynthesis</keyword>
<proteinExistence type="inferred from homology"/>
<feature type="chain" id="PRO_1000003135" description="Ribosome-recycling factor">
    <location>
        <begin position="1"/>
        <end position="186"/>
    </location>
</feature>
<dbReference type="EMBL" id="CP000108">
    <property type="protein sequence ID" value="ABB27599.1"/>
    <property type="molecule type" value="Genomic_DNA"/>
</dbReference>
<dbReference type="SMR" id="Q3ATS6"/>
<dbReference type="STRING" id="340177.Cag_0326"/>
<dbReference type="KEGG" id="cch:Cag_0326"/>
<dbReference type="eggNOG" id="COG0233">
    <property type="taxonomic scope" value="Bacteria"/>
</dbReference>
<dbReference type="HOGENOM" id="CLU_073981_2_0_10"/>
<dbReference type="OrthoDB" id="9804006at2"/>
<dbReference type="GO" id="GO:0005737">
    <property type="term" value="C:cytoplasm"/>
    <property type="evidence" value="ECO:0007669"/>
    <property type="project" value="UniProtKB-SubCell"/>
</dbReference>
<dbReference type="GO" id="GO:0043023">
    <property type="term" value="F:ribosomal large subunit binding"/>
    <property type="evidence" value="ECO:0007669"/>
    <property type="project" value="TreeGrafter"/>
</dbReference>
<dbReference type="GO" id="GO:0006415">
    <property type="term" value="P:translational termination"/>
    <property type="evidence" value="ECO:0007669"/>
    <property type="project" value="UniProtKB-UniRule"/>
</dbReference>
<dbReference type="CDD" id="cd00520">
    <property type="entry name" value="RRF"/>
    <property type="match status" value="1"/>
</dbReference>
<dbReference type="FunFam" id="3.30.1360.40:FF:000001">
    <property type="entry name" value="Ribosome-recycling factor"/>
    <property type="match status" value="1"/>
</dbReference>
<dbReference type="Gene3D" id="3.30.1360.40">
    <property type="match status" value="1"/>
</dbReference>
<dbReference type="Gene3D" id="1.10.132.20">
    <property type="entry name" value="Ribosome-recycling factor"/>
    <property type="match status" value="1"/>
</dbReference>
<dbReference type="HAMAP" id="MF_00040">
    <property type="entry name" value="RRF"/>
    <property type="match status" value="1"/>
</dbReference>
<dbReference type="InterPro" id="IPR002661">
    <property type="entry name" value="Ribosome_recyc_fac"/>
</dbReference>
<dbReference type="InterPro" id="IPR023584">
    <property type="entry name" value="Ribosome_recyc_fac_dom"/>
</dbReference>
<dbReference type="InterPro" id="IPR036191">
    <property type="entry name" value="RRF_sf"/>
</dbReference>
<dbReference type="NCBIfam" id="TIGR00496">
    <property type="entry name" value="frr"/>
    <property type="match status" value="1"/>
</dbReference>
<dbReference type="PANTHER" id="PTHR20982:SF3">
    <property type="entry name" value="MITOCHONDRIAL RIBOSOME RECYCLING FACTOR PSEUDO 1"/>
    <property type="match status" value="1"/>
</dbReference>
<dbReference type="PANTHER" id="PTHR20982">
    <property type="entry name" value="RIBOSOME RECYCLING FACTOR"/>
    <property type="match status" value="1"/>
</dbReference>
<dbReference type="Pfam" id="PF01765">
    <property type="entry name" value="RRF"/>
    <property type="match status" value="1"/>
</dbReference>
<dbReference type="SUPFAM" id="SSF55194">
    <property type="entry name" value="Ribosome recycling factor, RRF"/>
    <property type="match status" value="1"/>
</dbReference>
<protein>
    <recommendedName>
        <fullName evidence="1">Ribosome-recycling factor</fullName>
        <shortName evidence="1">RRF</shortName>
    </recommendedName>
    <alternativeName>
        <fullName evidence="1">Ribosome-releasing factor</fullName>
    </alternativeName>
</protein>
<sequence>MSVKDVAQKIEPKMKKCLEAFQHEITTIRTGKATTTLLDRVKVEAYGQQMPLKQVGNVSVQDAHTLMVQVWDKSMVSATEKAIRDANLGLNPAAEGQSIRVSIPPLTEERRKEFVKLTKKFGEDSKVSLRNLRRDMIQDIEKLEKAKAVSEDEKNKGKKDADDLLHKYEKLLMDMITAKEKEIMAV</sequence>
<accession>Q3ATS6</accession>
<name>RRF_CHLCH</name>
<comment type="function">
    <text evidence="1">Responsible for the release of ribosomes from messenger RNA at the termination of protein biosynthesis. May increase the efficiency of translation by recycling ribosomes from one round of translation to another.</text>
</comment>
<comment type="subcellular location">
    <subcellularLocation>
        <location evidence="1">Cytoplasm</location>
    </subcellularLocation>
</comment>
<comment type="similarity">
    <text evidence="1">Belongs to the RRF family.</text>
</comment>